<sequence length="494" mass="55024">MHQSSWKSRRHRRRGHRHSAWFRQHGSNERKDAGAQQSPQGSSDGHGEAPSTSSTAGSSSVPDLPGYYFDPEKKRYFRLLPGHNNCNPLTKESIRQKEMERKRLRLLEEEEQQGKKIARLGFNASSLLQKSKLGFLNATSYCRLAHELQVSCMQRKKVQIQSSDPSALASDQFNLIMADTNSDRLFTVNDVKVGGSKYGIISLHGLKTPTFRVHMHENLYFTNRKVNAMCWASLNHLDSHVLLCLMGIAETPGCATLLPTSLFVSNHAAGDRPGMLCSFRIPGAWSCAWSLNIQANNCFSTGLSRRVLVTSVVTGHRQSFGTSSDVLTQQFAVTAPLLFNGCRSGEIFAIDLRCQNQGKGWKATCLFHDSAVTSVQILQEEQCLMASDMAGTIKLWDLRTTKCIRQYEGHVNEYAHLPLHVHEEEGIMVAVGQDCYTRIWSLHDGQLLRTIPSPYPTSKADIPSVAFSSRLGGARGAPGLLMAVRQDLYCFSYS</sequence>
<evidence type="ECO:0000250" key="1"/>
<evidence type="ECO:0000256" key="2">
    <source>
        <dbReference type="SAM" id="MobiDB-lite"/>
    </source>
</evidence>
<name>DCAF4_BOVIN</name>
<comment type="function">
    <text evidence="1">May function as a substrate receptor for CUL4-DDB1 E3 ubiquitin-protein ligase complex.</text>
</comment>
<comment type="pathway">
    <text>Protein modification; protein ubiquitination.</text>
</comment>
<comment type="subunit">
    <text evidence="1">Interacts with DDB1 and CUL4A.</text>
</comment>
<proteinExistence type="evidence at transcript level"/>
<accession>Q58DC2</accession>
<protein>
    <recommendedName>
        <fullName>DDB1- and CUL4-associated factor 4</fullName>
    </recommendedName>
    <alternativeName>
        <fullName>WD repeat-containing protein 21A</fullName>
    </alternativeName>
</protein>
<reference key="1">
    <citation type="journal article" date="2005" name="BMC Genomics">
        <title>Characterization of 954 bovine full-CDS cDNA sequences.</title>
        <authorList>
            <person name="Harhay G.P."/>
            <person name="Sonstegard T.S."/>
            <person name="Keele J.W."/>
            <person name="Heaton M.P."/>
            <person name="Clawson M.L."/>
            <person name="Snelling W.M."/>
            <person name="Wiedmann R.T."/>
            <person name="Van Tassell C.P."/>
            <person name="Smith T.P.L."/>
        </authorList>
    </citation>
    <scope>NUCLEOTIDE SEQUENCE [LARGE SCALE MRNA]</scope>
</reference>
<feature type="chain" id="PRO_0000245504" description="DDB1- and CUL4-associated factor 4">
    <location>
        <begin position="1"/>
        <end position="494"/>
    </location>
</feature>
<feature type="repeat" description="WD 1">
    <location>
        <begin position="367"/>
        <end position="406"/>
    </location>
</feature>
<feature type="repeat" description="WD 2">
    <location>
        <begin position="409"/>
        <end position="450"/>
    </location>
</feature>
<feature type="region of interest" description="Disordered" evidence="2">
    <location>
        <begin position="1"/>
        <end position="65"/>
    </location>
</feature>
<feature type="compositionally biased region" description="Basic residues" evidence="2">
    <location>
        <begin position="7"/>
        <end position="20"/>
    </location>
</feature>
<feature type="compositionally biased region" description="Low complexity" evidence="2">
    <location>
        <begin position="51"/>
        <end position="60"/>
    </location>
</feature>
<keyword id="KW-1185">Reference proteome</keyword>
<keyword id="KW-0677">Repeat</keyword>
<keyword id="KW-0833">Ubl conjugation pathway</keyword>
<keyword id="KW-0853">WD repeat</keyword>
<organism>
    <name type="scientific">Bos taurus</name>
    <name type="common">Bovine</name>
    <dbReference type="NCBI Taxonomy" id="9913"/>
    <lineage>
        <taxon>Eukaryota</taxon>
        <taxon>Metazoa</taxon>
        <taxon>Chordata</taxon>
        <taxon>Craniata</taxon>
        <taxon>Vertebrata</taxon>
        <taxon>Euteleostomi</taxon>
        <taxon>Mammalia</taxon>
        <taxon>Eutheria</taxon>
        <taxon>Laurasiatheria</taxon>
        <taxon>Artiodactyla</taxon>
        <taxon>Ruminantia</taxon>
        <taxon>Pecora</taxon>
        <taxon>Bovidae</taxon>
        <taxon>Bovinae</taxon>
        <taxon>Bos</taxon>
    </lineage>
</organism>
<dbReference type="EMBL" id="BT021675">
    <property type="protein sequence ID" value="AAX46522.1"/>
    <property type="molecule type" value="mRNA"/>
</dbReference>
<dbReference type="RefSeq" id="NP_001019691.1">
    <property type="nucleotide sequence ID" value="NM_001024520.1"/>
</dbReference>
<dbReference type="SMR" id="Q58DC2"/>
<dbReference type="FunCoup" id="Q58DC2">
    <property type="interactions" value="2008"/>
</dbReference>
<dbReference type="STRING" id="9913.ENSBTAP00000011481"/>
<dbReference type="PaxDb" id="9913-ENSBTAP00000011481"/>
<dbReference type="GeneID" id="511629"/>
<dbReference type="KEGG" id="bta:511629"/>
<dbReference type="CTD" id="26094"/>
<dbReference type="eggNOG" id="KOG2695">
    <property type="taxonomic scope" value="Eukaryota"/>
</dbReference>
<dbReference type="InParanoid" id="Q58DC2"/>
<dbReference type="OrthoDB" id="128867at2759"/>
<dbReference type="UniPathway" id="UPA00143"/>
<dbReference type="Proteomes" id="UP000009136">
    <property type="component" value="Unplaced"/>
</dbReference>
<dbReference type="GO" id="GO:0080008">
    <property type="term" value="C:Cul4-RING E3 ubiquitin ligase complex"/>
    <property type="evidence" value="ECO:0000250"/>
    <property type="project" value="UniProtKB"/>
</dbReference>
<dbReference type="GO" id="GO:0016567">
    <property type="term" value="P:protein ubiquitination"/>
    <property type="evidence" value="ECO:0007669"/>
    <property type="project" value="UniProtKB-UniPathway"/>
</dbReference>
<dbReference type="FunFam" id="2.130.10.10:FF:000494">
    <property type="entry name" value="DDB1- and CUL4-associated factor 4 isoform X1"/>
    <property type="match status" value="1"/>
</dbReference>
<dbReference type="Gene3D" id="2.130.10.10">
    <property type="entry name" value="YVTN repeat-like/Quinoprotein amine dehydrogenase"/>
    <property type="match status" value="1"/>
</dbReference>
<dbReference type="InterPro" id="IPR052254">
    <property type="entry name" value="CUL4-DDB1_E3_ligase_receptor"/>
</dbReference>
<dbReference type="InterPro" id="IPR015943">
    <property type="entry name" value="WD40/YVTN_repeat-like_dom_sf"/>
</dbReference>
<dbReference type="InterPro" id="IPR036322">
    <property type="entry name" value="WD40_repeat_dom_sf"/>
</dbReference>
<dbReference type="InterPro" id="IPR001680">
    <property type="entry name" value="WD40_rpt"/>
</dbReference>
<dbReference type="PANTHER" id="PTHR44472:SF1">
    <property type="entry name" value="DDB1 AND CUL4 ASSOCIATED FACTOR 4"/>
    <property type="match status" value="1"/>
</dbReference>
<dbReference type="PANTHER" id="PTHR44472">
    <property type="entry name" value="DDB1- AND CUL4-ASSOCIATED FACTOR 4-RELATED"/>
    <property type="match status" value="1"/>
</dbReference>
<dbReference type="Pfam" id="PF23761">
    <property type="entry name" value="Beta-prop_DCAF4"/>
    <property type="match status" value="1"/>
</dbReference>
<dbReference type="SMART" id="SM00320">
    <property type="entry name" value="WD40"/>
    <property type="match status" value="2"/>
</dbReference>
<dbReference type="SUPFAM" id="SSF50978">
    <property type="entry name" value="WD40 repeat-like"/>
    <property type="match status" value="1"/>
</dbReference>
<dbReference type="PROSITE" id="PS50082">
    <property type="entry name" value="WD_REPEATS_2"/>
    <property type="match status" value="1"/>
</dbReference>
<dbReference type="PROSITE" id="PS50294">
    <property type="entry name" value="WD_REPEATS_REGION"/>
    <property type="match status" value="1"/>
</dbReference>
<gene>
    <name type="primary">DCAF4</name>
    <name type="synonym">WDR21A</name>
</gene>